<dbReference type="EC" id="6.1.1.11" evidence="1"/>
<dbReference type="EMBL" id="CP000789">
    <property type="protein sequence ID" value="ABU70769.1"/>
    <property type="molecule type" value="Genomic_DNA"/>
</dbReference>
<dbReference type="RefSeq" id="WP_012127605.1">
    <property type="nucleotide sequence ID" value="NC_009783.1"/>
</dbReference>
<dbReference type="SMR" id="A7MSW8"/>
<dbReference type="KEGG" id="vha:VIBHAR_01800"/>
<dbReference type="PATRIC" id="fig|338187.36.peg.1717"/>
<dbReference type="UniPathway" id="UPA00906">
    <property type="reaction ID" value="UER00895"/>
</dbReference>
<dbReference type="Proteomes" id="UP000008152">
    <property type="component" value="Chromosome I"/>
</dbReference>
<dbReference type="GO" id="GO:0005737">
    <property type="term" value="C:cytoplasm"/>
    <property type="evidence" value="ECO:0007669"/>
    <property type="project" value="UniProtKB-SubCell"/>
</dbReference>
<dbReference type="GO" id="GO:0005524">
    <property type="term" value="F:ATP binding"/>
    <property type="evidence" value="ECO:0007669"/>
    <property type="project" value="UniProtKB-UniRule"/>
</dbReference>
<dbReference type="GO" id="GO:0004828">
    <property type="term" value="F:serine-tRNA ligase activity"/>
    <property type="evidence" value="ECO:0007669"/>
    <property type="project" value="UniProtKB-UniRule"/>
</dbReference>
<dbReference type="GO" id="GO:0016260">
    <property type="term" value="P:selenocysteine biosynthetic process"/>
    <property type="evidence" value="ECO:0007669"/>
    <property type="project" value="UniProtKB-UniRule"/>
</dbReference>
<dbReference type="GO" id="GO:0006434">
    <property type="term" value="P:seryl-tRNA aminoacylation"/>
    <property type="evidence" value="ECO:0007669"/>
    <property type="project" value="UniProtKB-UniRule"/>
</dbReference>
<dbReference type="CDD" id="cd00770">
    <property type="entry name" value="SerRS_core"/>
    <property type="match status" value="1"/>
</dbReference>
<dbReference type="FunFam" id="3.30.930.10:FF:000018">
    <property type="entry name" value="Serine--tRNA ligase"/>
    <property type="match status" value="1"/>
</dbReference>
<dbReference type="Gene3D" id="3.30.930.10">
    <property type="entry name" value="Bira Bifunctional Protein, Domain 2"/>
    <property type="match status" value="1"/>
</dbReference>
<dbReference type="Gene3D" id="1.10.287.40">
    <property type="entry name" value="Serine-tRNA synthetase, tRNA binding domain"/>
    <property type="match status" value="1"/>
</dbReference>
<dbReference type="HAMAP" id="MF_00176">
    <property type="entry name" value="Ser_tRNA_synth_type1"/>
    <property type="match status" value="1"/>
</dbReference>
<dbReference type="InterPro" id="IPR002314">
    <property type="entry name" value="aa-tRNA-synt_IIb"/>
</dbReference>
<dbReference type="InterPro" id="IPR006195">
    <property type="entry name" value="aa-tRNA-synth_II"/>
</dbReference>
<dbReference type="InterPro" id="IPR045864">
    <property type="entry name" value="aa-tRNA-synth_II/BPL/LPL"/>
</dbReference>
<dbReference type="InterPro" id="IPR002317">
    <property type="entry name" value="Ser-tRNA-ligase_type_1"/>
</dbReference>
<dbReference type="InterPro" id="IPR015866">
    <property type="entry name" value="Ser-tRNA-synth_1_N"/>
</dbReference>
<dbReference type="InterPro" id="IPR042103">
    <property type="entry name" value="SerRS_1_N_sf"/>
</dbReference>
<dbReference type="InterPro" id="IPR033729">
    <property type="entry name" value="SerRS_core"/>
</dbReference>
<dbReference type="InterPro" id="IPR010978">
    <property type="entry name" value="tRNA-bd_arm"/>
</dbReference>
<dbReference type="NCBIfam" id="TIGR00414">
    <property type="entry name" value="serS"/>
    <property type="match status" value="1"/>
</dbReference>
<dbReference type="PANTHER" id="PTHR43697:SF1">
    <property type="entry name" value="SERINE--TRNA LIGASE"/>
    <property type="match status" value="1"/>
</dbReference>
<dbReference type="PANTHER" id="PTHR43697">
    <property type="entry name" value="SERYL-TRNA SYNTHETASE"/>
    <property type="match status" value="1"/>
</dbReference>
<dbReference type="Pfam" id="PF02403">
    <property type="entry name" value="Seryl_tRNA_N"/>
    <property type="match status" value="1"/>
</dbReference>
<dbReference type="Pfam" id="PF00587">
    <property type="entry name" value="tRNA-synt_2b"/>
    <property type="match status" value="1"/>
</dbReference>
<dbReference type="PIRSF" id="PIRSF001529">
    <property type="entry name" value="Ser-tRNA-synth_IIa"/>
    <property type="match status" value="1"/>
</dbReference>
<dbReference type="PRINTS" id="PR00981">
    <property type="entry name" value="TRNASYNTHSER"/>
</dbReference>
<dbReference type="SUPFAM" id="SSF55681">
    <property type="entry name" value="Class II aaRS and biotin synthetases"/>
    <property type="match status" value="1"/>
</dbReference>
<dbReference type="SUPFAM" id="SSF46589">
    <property type="entry name" value="tRNA-binding arm"/>
    <property type="match status" value="1"/>
</dbReference>
<dbReference type="PROSITE" id="PS50862">
    <property type="entry name" value="AA_TRNA_LIGASE_II"/>
    <property type="match status" value="1"/>
</dbReference>
<organism>
    <name type="scientific">Vibrio campbellii (strain ATCC BAA-1116)</name>
    <dbReference type="NCBI Taxonomy" id="2902295"/>
    <lineage>
        <taxon>Bacteria</taxon>
        <taxon>Pseudomonadati</taxon>
        <taxon>Pseudomonadota</taxon>
        <taxon>Gammaproteobacteria</taxon>
        <taxon>Vibrionales</taxon>
        <taxon>Vibrionaceae</taxon>
        <taxon>Vibrio</taxon>
    </lineage>
</organism>
<comment type="function">
    <text evidence="1">Catalyzes the attachment of serine to tRNA(Ser). Is also able to aminoacylate tRNA(Sec) with serine, to form the misacylated tRNA L-seryl-tRNA(Sec), which will be further converted into selenocysteinyl-tRNA(Sec).</text>
</comment>
<comment type="catalytic activity">
    <reaction evidence="1">
        <text>tRNA(Ser) + L-serine + ATP = L-seryl-tRNA(Ser) + AMP + diphosphate + H(+)</text>
        <dbReference type="Rhea" id="RHEA:12292"/>
        <dbReference type="Rhea" id="RHEA-COMP:9669"/>
        <dbReference type="Rhea" id="RHEA-COMP:9703"/>
        <dbReference type="ChEBI" id="CHEBI:15378"/>
        <dbReference type="ChEBI" id="CHEBI:30616"/>
        <dbReference type="ChEBI" id="CHEBI:33019"/>
        <dbReference type="ChEBI" id="CHEBI:33384"/>
        <dbReference type="ChEBI" id="CHEBI:78442"/>
        <dbReference type="ChEBI" id="CHEBI:78533"/>
        <dbReference type="ChEBI" id="CHEBI:456215"/>
        <dbReference type="EC" id="6.1.1.11"/>
    </reaction>
</comment>
<comment type="catalytic activity">
    <reaction evidence="1">
        <text>tRNA(Sec) + L-serine + ATP = L-seryl-tRNA(Sec) + AMP + diphosphate + H(+)</text>
        <dbReference type="Rhea" id="RHEA:42580"/>
        <dbReference type="Rhea" id="RHEA-COMP:9742"/>
        <dbReference type="Rhea" id="RHEA-COMP:10128"/>
        <dbReference type="ChEBI" id="CHEBI:15378"/>
        <dbReference type="ChEBI" id="CHEBI:30616"/>
        <dbReference type="ChEBI" id="CHEBI:33019"/>
        <dbReference type="ChEBI" id="CHEBI:33384"/>
        <dbReference type="ChEBI" id="CHEBI:78442"/>
        <dbReference type="ChEBI" id="CHEBI:78533"/>
        <dbReference type="ChEBI" id="CHEBI:456215"/>
        <dbReference type="EC" id="6.1.1.11"/>
    </reaction>
</comment>
<comment type="pathway">
    <text evidence="1">Aminoacyl-tRNA biosynthesis; selenocysteinyl-tRNA(Sec) biosynthesis; L-seryl-tRNA(Sec) from L-serine and tRNA(Sec): step 1/1.</text>
</comment>
<comment type="subunit">
    <text evidence="1">Homodimer. The tRNA molecule binds across the dimer.</text>
</comment>
<comment type="subcellular location">
    <subcellularLocation>
        <location evidence="1">Cytoplasm</location>
    </subcellularLocation>
</comment>
<comment type="domain">
    <text evidence="1">Consists of two distinct domains, a catalytic core and a N-terminal extension that is involved in tRNA binding.</text>
</comment>
<comment type="similarity">
    <text evidence="1">Belongs to the class-II aminoacyl-tRNA synthetase family. Type-1 seryl-tRNA synthetase subfamily.</text>
</comment>
<gene>
    <name evidence="1" type="primary">serS</name>
    <name type="ordered locus">VIBHAR_01800</name>
</gene>
<name>SYS_VIBC1</name>
<feature type="chain" id="PRO_1000019865" description="Serine--tRNA ligase">
    <location>
        <begin position="1"/>
        <end position="435"/>
    </location>
</feature>
<feature type="binding site" evidence="1">
    <location>
        <begin position="242"/>
        <end position="244"/>
    </location>
    <ligand>
        <name>L-serine</name>
        <dbReference type="ChEBI" id="CHEBI:33384"/>
    </ligand>
</feature>
<feature type="binding site" evidence="1">
    <location>
        <begin position="273"/>
        <end position="275"/>
    </location>
    <ligand>
        <name>ATP</name>
        <dbReference type="ChEBI" id="CHEBI:30616"/>
    </ligand>
</feature>
<feature type="binding site" evidence="1">
    <location>
        <position position="296"/>
    </location>
    <ligand>
        <name>L-serine</name>
        <dbReference type="ChEBI" id="CHEBI:33384"/>
    </ligand>
</feature>
<feature type="binding site" evidence="1">
    <location>
        <begin position="360"/>
        <end position="363"/>
    </location>
    <ligand>
        <name>ATP</name>
        <dbReference type="ChEBI" id="CHEBI:30616"/>
    </ligand>
</feature>
<feature type="binding site" evidence="1">
    <location>
        <position position="396"/>
    </location>
    <ligand>
        <name>L-serine</name>
        <dbReference type="ChEBI" id="CHEBI:33384"/>
    </ligand>
</feature>
<accession>A7MSW8</accession>
<evidence type="ECO:0000255" key="1">
    <source>
        <dbReference type="HAMAP-Rule" id="MF_00176"/>
    </source>
</evidence>
<keyword id="KW-0030">Aminoacyl-tRNA synthetase</keyword>
<keyword id="KW-0067">ATP-binding</keyword>
<keyword id="KW-0963">Cytoplasm</keyword>
<keyword id="KW-0436">Ligase</keyword>
<keyword id="KW-0547">Nucleotide-binding</keyword>
<keyword id="KW-0648">Protein biosynthesis</keyword>
<protein>
    <recommendedName>
        <fullName evidence="1">Serine--tRNA ligase</fullName>
        <ecNumber evidence="1">6.1.1.11</ecNumber>
    </recommendedName>
    <alternativeName>
        <fullName evidence="1">Seryl-tRNA synthetase</fullName>
        <shortName evidence="1">SerRS</shortName>
    </alternativeName>
    <alternativeName>
        <fullName evidence="1">Seryl-tRNA(Ser/Sec) synthetase</fullName>
    </alternativeName>
</protein>
<sequence length="435" mass="48927">MLDSKLLRTELDETAAKLARRGFKLDVETIRKLEEQRKSIQVEVENLQSTRNSISKQIGQKMAAGDKEGAEEIKKQIGTLGSDLDAKKVELEQVMAQLDEFTLSVPNIPDDEVPDGKDENDNVEISRWGEPKTYDFELKDHVDLGEMGGGLDFASAVKITGARFIVMKGQFARLHRAIAQFMLDLHTEEHGYTEMYVPYLVNSDSLFGTGQLPKFGKDLFHTEPLVEKVNDEEPRKLSLIPTAEVPVTNLVRDTISDEADLPIKMTAHTPCFRSEAGSYGRDTRGLIRMHQFDKVELVQITKPEDSMNALEELTGHAEKVLQLLELPYRKVVLCTGDMGFGARKTYDLEVWVPAQETYREISSCSNMWDFQARRMQARFRRKGEKKPELVHTLNGSGLAVGRTMVAILENNQEADGRIAIPTVLQKYMAGATHIG</sequence>
<proteinExistence type="inferred from homology"/>
<reference key="1">
    <citation type="submission" date="2007-08" db="EMBL/GenBank/DDBJ databases">
        <authorList>
            <consortium name="The Vibrio harveyi Genome Sequencing Project"/>
            <person name="Bassler B."/>
            <person name="Clifton S.W."/>
            <person name="Fulton L."/>
            <person name="Delehaunty K."/>
            <person name="Fronick C."/>
            <person name="Harrison M."/>
            <person name="Markivic C."/>
            <person name="Fulton R."/>
            <person name="Tin-Wollam A.-M."/>
            <person name="Shah N."/>
            <person name="Pepin K."/>
            <person name="Nash W."/>
            <person name="Thiruvilangam P."/>
            <person name="Bhonagiri V."/>
            <person name="Waters C."/>
            <person name="Tu K.C."/>
            <person name="Irgon J."/>
            <person name="Wilson R.K."/>
        </authorList>
    </citation>
    <scope>NUCLEOTIDE SEQUENCE [LARGE SCALE GENOMIC DNA]</scope>
    <source>
        <strain>ATCC BAA-1116 / BB120</strain>
    </source>
</reference>